<protein>
    <recommendedName>
        <fullName evidence="1">Aspartate carbamoyltransferase catalytic subunit</fullName>
        <ecNumber evidence="1">2.1.3.2</ecNumber>
    </recommendedName>
    <alternativeName>
        <fullName evidence="1">Aspartate transcarbamylase</fullName>
        <shortName evidence="1">ATCase</shortName>
    </alternativeName>
</protein>
<feature type="chain" id="PRO_0000321072" description="Aspartate carbamoyltransferase catalytic subunit">
    <location>
        <begin position="1"/>
        <end position="321"/>
    </location>
</feature>
<feature type="binding site" evidence="1">
    <location>
        <position position="64"/>
    </location>
    <ligand>
        <name>carbamoyl phosphate</name>
        <dbReference type="ChEBI" id="CHEBI:58228"/>
    </ligand>
</feature>
<feature type="binding site" evidence="1">
    <location>
        <position position="65"/>
    </location>
    <ligand>
        <name>carbamoyl phosphate</name>
        <dbReference type="ChEBI" id="CHEBI:58228"/>
    </ligand>
</feature>
<feature type="binding site" evidence="1">
    <location>
        <position position="92"/>
    </location>
    <ligand>
        <name>L-aspartate</name>
        <dbReference type="ChEBI" id="CHEBI:29991"/>
    </ligand>
</feature>
<feature type="binding site" evidence="1">
    <location>
        <position position="114"/>
    </location>
    <ligand>
        <name>carbamoyl phosphate</name>
        <dbReference type="ChEBI" id="CHEBI:58228"/>
    </ligand>
</feature>
<feature type="binding site" evidence="1">
    <location>
        <position position="142"/>
    </location>
    <ligand>
        <name>carbamoyl phosphate</name>
        <dbReference type="ChEBI" id="CHEBI:58228"/>
    </ligand>
</feature>
<feature type="binding site" evidence="1">
    <location>
        <position position="145"/>
    </location>
    <ligand>
        <name>carbamoyl phosphate</name>
        <dbReference type="ChEBI" id="CHEBI:58228"/>
    </ligand>
</feature>
<feature type="binding site" evidence="1">
    <location>
        <position position="175"/>
    </location>
    <ligand>
        <name>L-aspartate</name>
        <dbReference type="ChEBI" id="CHEBI:29991"/>
    </ligand>
</feature>
<feature type="binding site" evidence="1">
    <location>
        <position position="229"/>
    </location>
    <ligand>
        <name>L-aspartate</name>
        <dbReference type="ChEBI" id="CHEBI:29991"/>
    </ligand>
</feature>
<feature type="binding site" evidence="1">
    <location>
        <position position="270"/>
    </location>
    <ligand>
        <name>carbamoyl phosphate</name>
        <dbReference type="ChEBI" id="CHEBI:58228"/>
    </ligand>
</feature>
<feature type="binding site" evidence="1">
    <location>
        <position position="271"/>
    </location>
    <ligand>
        <name>carbamoyl phosphate</name>
        <dbReference type="ChEBI" id="CHEBI:58228"/>
    </ligand>
</feature>
<name>PYRB_AZOC5</name>
<sequence length="321" mass="34923">MITAPFFTLDRRDLLGIEGLSAPEIVGLLDLAEEFVVLNRQIEKKRSTLRGRTQVNLFFEASTRTQSSFELAGKRLGADVMNMSVGNSSVKKGETLIDTAMTLNAMRPDILVVRHHASGAVALLARKVDCCVVNAGDGAHEHPTQALLDALTIRRNKGRIEGLTVAVCGDVLHSRVARSNILLLHTLGARVRVVAPSTLLPTGIENFGVEVHRSMESGLEGADIVMMLRLQRERMAGSFIPSVKEYFHYYGLDEAKLKRAKPDALVMHPGPMNRGVEIDSAVADGAQSLIREQVEMGVAVRMAVLDALARKLPNATGAERD</sequence>
<organism>
    <name type="scientific">Azorhizobium caulinodans (strain ATCC 43989 / DSM 5975 / JCM 20966 / LMG 6465 / NBRC 14845 / NCIMB 13405 / ORS 571)</name>
    <dbReference type="NCBI Taxonomy" id="438753"/>
    <lineage>
        <taxon>Bacteria</taxon>
        <taxon>Pseudomonadati</taxon>
        <taxon>Pseudomonadota</taxon>
        <taxon>Alphaproteobacteria</taxon>
        <taxon>Hyphomicrobiales</taxon>
        <taxon>Xanthobacteraceae</taxon>
        <taxon>Azorhizobium</taxon>
    </lineage>
</organism>
<comment type="function">
    <text evidence="1">Catalyzes the condensation of carbamoyl phosphate and aspartate to form carbamoyl aspartate and inorganic phosphate, the committed step in the de novo pyrimidine nucleotide biosynthesis pathway.</text>
</comment>
<comment type="catalytic activity">
    <reaction evidence="1">
        <text>carbamoyl phosphate + L-aspartate = N-carbamoyl-L-aspartate + phosphate + H(+)</text>
        <dbReference type="Rhea" id="RHEA:20013"/>
        <dbReference type="ChEBI" id="CHEBI:15378"/>
        <dbReference type="ChEBI" id="CHEBI:29991"/>
        <dbReference type="ChEBI" id="CHEBI:32814"/>
        <dbReference type="ChEBI" id="CHEBI:43474"/>
        <dbReference type="ChEBI" id="CHEBI:58228"/>
        <dbReference type="EC" id="2.1.3.2"/>
    </reaction>
</comment>
<comment type="pathway">
    <text evidence="1">Pyrimidine metabolism; UMP biosynthesis via de novo pathway; (S)-dihydroorotate from bicarbonate: step 2/3.</text>
</comment>
<comment type="subunit">
    <text evidence="1">Heterododecamer (2C3:3R2) of six catalytic PyrB chains organized as two trimers (C3), and six regulatory PyrI chains organized as three dimers (R2).</text>
</comment>
<comment type="similarity">
    <text evidence="1">Belongs to the aspartate/ornithine carbamoyltransferase superfamily. ATCase family.</text>
</comment>
<keyword id="KW-0665">Pyrimidine biosynthesis</keyword>
<keyword id="KW-1185">Reference proteome</keyword>
<keyword id="KW-0808">Transferase</keyword>
<gene>
    <name evidence="1" type="primary">pyrB</name>
    <name type="ordered locus">AZC_2851</name>
</gene>
<evidence type="ECO:0000255" key="1">
    <source>
        <dbReference type="HAMAP-Rule" id="MF_00001"/>
    </source>
</evidence>
<proteinExistence type="inferred from homology"/>
<reference key="1">
    <citation type="submission" date="2007-04" db="EMBL/GenBank/DDBJ databases">
        <title>Complete genome sequence of the nitrogen-fixing bacterium Azorhizobium caulinodans ORS571.</title>
        <authorList>
            <person name="Lee K.B."/>
            <person name="Backer P.D."/>
            <person name="Aono T."/>
            <person name="Liu C.T."/>
            <person name="Suzuki S."/>
            <person name="Suzuki T."/>
            <person name="Kaneko T."/>
            <person name="Yamada M."/>
            <person name="Tabata S."/>
            <person name="Kupfer D.M."/>
            <person name="Najar F.Z."/>
            <person name="Wiley G.B."/>
            <person name="Roe B."/>
            <person name="Binnewies T."/>
            <person name="Ussery D."/>
            <person name="Vereecke D."/>
            <person name="Gevers D."/>
            <person name="Holsters M."/>
            <person name="Oyaizu H."/>
        </authorList>
    </citation>
    <scope>NUCLEOTIDE SEQUENCE [LARGE SCALE GENOMIC DNA]</scope>
    <source>
        <strain>ATCC 43989 / DSM 5975 / JCM 20966 / LMG 6465 / NBRC 14845 / NCIMB 13405 / ORS 571</strain>
    </source>
</reference>
<dbReference type="EC" id="2.1.3.2" evidence="1"/>
<dbReference type="EMBL" id="AP009384">
    <property type="protein sequence ID" value="BAF88849.1"/>
    <property type="molecule type" value="Genomic_DNA"/>
</dbReference>
<dbReference type="RefSeq" id="WP_012171375.1">
    <property type="nucleotide sequence ID" value="NC_009937.1"/>
</dbReference>
<dbReference type="SMR" id="A8ICW0"/>
<dbReference type="STRING" id="438753.AZC_2851"/>
<dbReference type="KEGG" id="azc:AZC_2851"/>
<dbReference type="eggNOG" id="COG0540">
    <property type="taxonomic scope" value="Bacteria"/>
</dbReference>
<dbReference type="HOGENOM" id="CLU_043846_2_0_5"/>
<dbReference type="UniPathway" id="UPA00070">
    <property type="reaction ID" value="UER00116"/>
</dbReference>
<dbReference type="Proteomes" id="UP000000270">
    <property type="component" value="Chromosome"/>
</dbReference>
<dbReference type="GO" id="GO:0005829">
    <property type="term" value="C:cytosol"/>
    <property type="evidence" value="ECO:0007669"/>
    <property type="project" value="TreeGrafter"/>
</dbReference>
<dbReference type="GO" id="GO:0016597">
    <property type="term" value="F:amino acid binding"/>
    <property type="evidence" value="ECO:0007669"/>
    <property type="project" value="InterPro"/>
</dbReference>
<dbReference type="GO" id="GO:0004070">
    <property type="term" value="F:aspartate carbamoyltransferase activity"/>
    <property type="evidence" value="ECO:0007669"/>
    <property type="project" value="UniProtKB-UniRule"/>
</dbReference>
<dbReference type="GO" id="GO:0006207">
    <property type="term" value="P:'de novo' pyrimidine nucleobase biosynthetic process"/>
    <property type="evidence" value="ECO:0007669"/>
    <property type="project" value="InterPro"/>
</dbReference>
<dbReference type="GO" id="GO:0044205">
    <property type="term" value="P:'de novo' UMP biosynthetic process"/>
    <property type="evidence" value="ECO:0007669"/>
    <property type="project" value="UniProtKB-UniRule"/>
</dbReference>
<dbReference type="GO" id="GO:0006520">
    <property type="term" value="P:amino acid metabolic process"/>
    <property type="evidence" value="ECO:0007669"/>
    <property type="project" value="InterPro"/>
</dbReference>
<dbReference type="FunFam" id="3.40.50.1370:FF:000007">
    <property type="entry name" value="Aspartate carbamoyltransferase"/>
    <property type="match status" value="1"/>
</dbReference>
<dbReference type="Gene3D" id="3.40.50.1370">
    <property type="entry name" value="Aspartate/ornithine carbamoyltransferase"/>
    <property type="match status" value="2"/>
</dbReference>
<dbReference type="HAMAP" id="MF_00001">
    <property type="entry name" value="Asp_carb_tr"/>
    <property type="match status" value="1"/>
</dbReference>
<dbReference type="InterPro" id="IPR006132">
    <property type="entry name" value="Asp/Orn_carbamoyltranf_P-bd"/>
</dbReference>
<dbReference type="InterPro" id="IPR006130">
    <property type="entry name" value="Asp/Orn_carbamoylTrfase"/>
</dbReference>
<dbReference type="InterPro" id="IPR036901">
    <property type="entry name" value="Asp/Orn_carbamoylTrfase_sf"/>
</dbReference>
<dbReference type="InterPro" id="IPR002082">
    <property type="entry name" value="Asp_carbamoyltransf"/>
</dbReference>
<dbReference type="InterPro" id="IPR006131">
    <property type="entry name" value="Asp_carbamoyltransf_Asp/Orn-bd"/>
</dbReference>
<dbReference type="NCBIfam" id="TIGR00670">
    <property type="entry name" value="asp_carb_tr"/>
    <property type="match status" value="1"/>
</dbReference>
<dbReference type="NCBIfam" id="NF002032">
    <property type="entry name" value="PRK00856.1"/>
    <property type="match status" value="1"/>
</dbReference>
<dbReference type="PANTHER" id="PTHR45753:SF6">
    <property type="entry name" value="ASPARTATE CARBAMOYLTRANSFERASE"/>
    <property type="match status" value="1"/>
</dbReference>
<dbReference type="PANTHER" id="PTHR45753">
    <property type="entry name" value="ORNITHINE CARBAMOYLTRANSFERASE, MITOCHONDRIAL"/>
    <property type="match status" value="1"/>
</dbReference>
<dbReference type="Pfam" id="PF00185">
    <property type="entry name" value="OTCace"/>
    <property type="match status" value="1"/>
</dbReference>
<dbReference type="Pfam" id="PF02729">
    <property type="entry name" value="OTCace_N"/>
    <property type="match status" value="1"/>
</dbReference>
<dbReference type="PRINTS" id="PR00100">
    <property type="entry name" value="AOTCASE"/>
</dbReference>
<dbReference type="PRINTS" id="PR00101">
    <property type="entry name" value="ATCASE"/>
</dbReference>
<dbReference type="SUPFAM" id="SSF53671">
    <property type="entry name" value="Aspartate/ornithine carbamoyltransferase"/>
    <property type="match status" value="1"/>
</dbReference>
<dbReference type="PROSITE" id="PS00097">
    <property type="entry name" value="CARBAMOYLTRANSFERASE"/>
    <property type="match status" value="1"/>
</dbReference>
<accession>A8ICW0</accession>